<proteinExistence type="evidence at protein level"/>
<accession>O75845</accession>
<accession>O00119</accession>
<accession>Q6GTM5</accession>
<accession>Q9UK15</accession>
<sequence>MDLVLRVADYYFFTPYVYPATWPEDDIFRQAISLLIVTNVGAYILYFFCATLSYYFVFDHALMKHPQFLKNQVRREIKFTVQALPWISILTVALFLLEIRGYSKLHDDLGEFPYGLFELVVSIISFLFFTDMFIYWIHRGLHHRLVYKRLHKPHHIWKIPTPFASHAFHPIDGFLQSLPYHIYPFIFPLHKVVYLSLYILVNIWTISIHDGDFRVPQILQPFINGSAHHTDHHMFFDYNYGQYFTLWDRIGGSFKNPSSFEGKGPLSYVKEMTEGKRSSHSGNGCKNEKLFNGEFTKTE</sequence>
<gene>
    <name evidence="13" type="primary">SC5D</name>
    <name evidence="9" type="synonym">SC5DL</name>
</gene>
<dbReference type="EC" id="1.14.19.20" evidence="4"/>
<dbReference type="EMBL" id="D85181">
    <property type="protein sequence ID" value="BAA18970.1"/>
    <property type="molecule type" value="mRNA"/>
</dbReference>
<dbReference type="EMBL" id="AF187981">
    <property type="protein sequence ID" value="AAF00544.1"/>
    <property type="molecule type" value="mRNA"/>
</dbReference>
<dbReference type="EMBL" id="AB016247">
    <property type="protein sequence ID" value="BAA33729.1"/>
    <property type="molecule type" value="mRNA"/>
</dbReference>
<dbReference type="EMBL" id="AB057650">
    <property type="protein sequence ID" value="BAB68218.1"/>
    <property type="molecule type" value="Genomic_DNA"/>
</dbReference>
<dbReference type="EMBL" id="AK312634">
    <property type="protein sequence ID" value="BAG35518.1"/>
    <property type="molecule type" value="mRNA"/>
</dbReference>
<dbReference type="EMBL" id="AK222686">
    <property type="protein sequence ID" value="BAD96406.1"/>
    <property type="molecule type" value="mRNA"/>
</dbReference>
<dbReference type="EMBL" id="AK223141">
    <property type="protein sequence ID" value="BAD96861.1"/>
    <property type="molecule type" value="mRNA"/>
</dbReference>
<dbReference type="EMBL" id="CH471065">
    <property type="protein sequence ID" value="EAW67520.1"/>
    <property type="molecule type" value="Genomic_DNA"/>
</dbReference>
<dbReference type="EMBL" id="BC012333">
    <property type="protein sequence ID" value="AAH12333.1"/>
    <property type="molecule type" value="mRNA"/>
</dbReference>
<dbReference type="EMBL" id="BC050427">
    <property type="protein sequence ID" value="AAH50427.1"/>
    <property type="molecule type" value="mRNA"/>
</dbReference>
<dbReference type="CCDS" id="CCDS8435.1"/>
<dbReference type="RefSeq" id="NP_001020127.1">
    <property type="nucleotide sequence ID" value="NM_001024956.3"/>
</dbReference>
<dbReference type="RefSeq" id="NP_008849.2">
    <property type="nucleotide sequence ID" value="NM_006918.5"/>
</dbReference>
<dbReference type="BioGRID" id="112216">
    <property type="interactions" value="55"/>
</dbReference>
<dbReference type="FunCoup" id="O75845">
    <property type="interactions" value="756"/>
</dbReference>
<dbReference type="IntAct" id="O75845">
    <property type="interactions" value="31"/>
</dbReference>
<dbReference type="MINT" id="O75845"/>
<dbReference type="STRING" id="9606.ENSP00000264027"/>
<dbReference type="ChEMBL" id="CHEMBL3509588"/>
<dbReference type="SwissLipids" id="SLP:000001259"/>
<dbReference type="iPTMnet" id="O75845"/>
<dbReference type="PhosphoSitePlus" id="O75845"/>
<dbReference type="SwissPalm" id="O75845"/>
<dbReference type="BioMuta" id="SC5D"/>
<dbReference type="jPOST" id="O75845"/>
<dbReference type="MassIVE" id="O75845"/>
<dbReference type="PaxDb" id="9606-ENSP00000264027"/>
<dbReference type="PeptideAtlas" id="O75845"/>
<dbReference type="ProteomicsDB" id="50227"/>
<dbReference type="Pumba" id="O75845"/>
<dbReference type="TopDownProteomics" id="O75845"/>
<dbReference type="Antibodypedia" id="45921">
    <property type="antibodies" value="29 antibodies from 13 providers"/>
</dbReference>
<dbReference type="DNASU" id="6309"/>
<dbReference type="Ensembl" id="ENST00000264027.9">
    <property type="protein sequence ID" value="ENSP00000264027.4"/>
    <property type="gene ID" value="ENSG00000109929.10"/>
</dbReference>
<dbReference type="Ensembl" id="ENST00000392789.2">
    <property type="protein sequence ID" value="ENSP00000376539.2"/>
    <property type="gene ID" value="ENSG00000109929.10"/>
</dbReference>
<dbReference type="GeneID" id="6309"/>
<dbReference type="KEGG" id="hsa:6309"/>
<dbReference type="MANE-Select" id="ENST00000264027.9">
    <property type="protein sequence ID" value="ENSP00000264027.4"/>
    <property type="RefSeq nucleotide sequence ID" value="NM_006918.5"/>
    <property type="RefSeq protein sequence ID" value="NP_008849.2"/>
</dbReference>
<dbReference type="UCSC" id="uc001pxu.4">
    <property type="organism name" value="human"/>
</dbReference>
<dbReference type="AGR" id="HGNC:10547"/>
<dbReference type="CTD" id="6309"/>
<dbReference type="DisGeNET" id="6309"/>
<dbReference type="GeneCards" id="SC5D"/>
<dbReference type="GeneReviews" id="SC5D"/>
<dbReference type="HGNC" id="HGNC:10547">
    <property type="gene designation" value="SC5D"/>
</dbReference>
<dbReference type="HPA" id="ENSG00000109929">
    <property type="expression patterns" value="Tissue enhanced (liver)"/>
</dbReference>
<dbReference type="MalaCards" id="SC5D"/>
<dbReference type="MIM" id="602286">
    <property type="type" value="gene"/>
</dbReference>
<dbReference type="MIM" id="607330">
    <property type="type" value="phenotype"/>
</dbReference>
<dbReference type="neXtProt" id="NX_O75845"/>
<dbReference type="OpenTargets" id="ENSG00000109929"/>
<dbReference type="Orphanet" id="46059">
    <property type="disease" value="Lathosterolosis"/>
</dbReference>
<dbReference type="PharmGKB" id="PA34957"/>
<dbReference type="VEuPathDB" id="HostDB:ENSG00000109929"/>
<dbReference type="eggNOG" id="KOG0872">
    <property type="taxonomic scope" value="Eukaryota"/>
</dbReference>
<dbReference type="GeneTree" id="ENSGT00550000075101"/>
<dbReference type="InParanoid" id="O75845"/>
<dbReference type="OMA" id="FVFICPM"/>
<dbReference type="OrthoDB" id="408954at2759"/>
<dbReference type="PAN-GO" id="O75845">
    <property type="GO annotations" value="3 GO annotations based on evolutionary models"/>
</dbReference>
<dbReference type="PhylomeDB" id="O75845"/>
<dbReference type="TreeFam" id="TF300797"/>
<dbReference type="BioCyc" id="MetaCyc:HS03271-MONOMER"/>
<dbReference type="BRENDA" id="1.14.19.20">
    <property type="organism ID" value="2681"/>
</dbReference>
<dbReference type="PathwayCommons" id="O75845"/>
<dbReference type="Reactome" id="R-HSA-2426168">
    <property type="pathway name" value="Activation of gene expression by SREBF (SREBP)"/>
</dbReference>
<dbReference type="Reactome" id="R-HSA-6807047">
    <property type="pathway name" value="Cholesterol biosynthesis via desmosterol"/>
</dbReference>
<dbReference type="Reactome" id="R-HSA-6807062">
    <property type="pathway name" value="Cholesterol biosynthesis via lathosterol"/>
</dbReference>
<dbReference type="SignaLink" id="O75845"/>
<dbReference type="UniPathway" id="UPA00063"/>
<dbReference type="BioGRID-ORCS" id="6309">
    <property type="hits" value="24 hits in 1152 CRISPR screens"/>
</dbReference>
<dbReference type="ChiTaRS" id="SC5D">
    <property type="organism name" value="human"/>
</dbReference>
<dbReference type="GeneWiki" id="Sterol-C5-desaturase-like"/>
<dbReference type="GenomeRNAi" id="6309"/>
<dbReference type="Pharos" id="O75845">
    <property type="development level" value="Tbio"/>
</dbReference>
<dbReference type="PRO" id="PR:O75845"/>
<dbReference type="Proteomes" id="UP000005640">
    <property type="component" value="Chromosome 11"/>
</dbReference>
<dbReference type="RNAct" id="O75845">
    <property type="molecule type" value="protein"/>
</dbReference>
<dbReference type="Bgee" id="ENSG00000109929">
    <property type="expression patterns" value="Expressed in adrenal tissue and 207 other cell types or tissues"/>
</dbReference>
<dbReference type="ExpressionAtlas" id="O75845">
    <property type="expression patterns" value="baseline and differential"/>
</dbReference>
<dbReference type="GO" id="GO:0005789">
    <property type="term" value="C:endoplasmic reticulum membrane"/>
    <property type="evidence" value="ECO:0000314"/>
    <property type="project" value="UniProtKB"/>
</dbReference>
<dbReference type="GO" id="GO:0016020">
    <property type="term" value="C:membrane"/>
    <property type="evidence" value="ECO:0000318"/>
    <property type="project" value="GO_Central"/>
</dbReference>
<dbReference type="GO" id="GO:0000248">
    <property type="term" value="F:C-5 sterol desaturase activity"/>
    <property type="evidence" value="ECO:0000269"/>
    <property type="project" value="Reactome"/>
</dbReference>
<dbReference type="GO" id="GO:0050046">
    <property type="term" value="F:delta7-sterol 5(6)-desaturase activity"/>
    <property type="evidence" value="ECO:0000314"/>
    <property type="project" value="UniProtKB"/>
</dbReference>
<dbReference type="GO" id="GO:0005506">
    <property type="term" value="F:iron ion binding"/>
    <property type="evidence" value="ECO:0007669"/>
    <property type="project" value="InterPro"/>
</dbReference>
<dbReference type="GO" id="GO:0006695">
    <property type="term" value="P:cholesterol biosynthetic process"/>
    <property type="evidence" value="ECO:0000314"/>
    <property type="project" value="UniProt"/>
</dbReference>
<dbReference type="GO" id="GO:0033489">
    <property type="term" value="P:cholesterol biosynthetic process via desmosterol"/>
    <property type="evidence" value="ECO:0000304"/>
    <property type="project" value="Reactome"/>
</dbReference>
<dbReference type="GO" id="GO:0033490">
    <property type="term" value="P:cholesterol biosynthetic process via lathosterol"/>
    <property type="evidence" value="ECO:0000314"/>
    <property type="project" value="UniProtKB"/>
</dbReference>
<dbReference type="GO" id="GO:0110076">
    <property type="term" value="P:negative regulation of ferroptosis"/>
    <property type="evidence" value="ECO:0000315"/>
    <property type="project" value="UniProtKB"/>
</dbReference>
<dbReference type="InterPro" id="IPR006694">
    <property type="entry name" value="Fatty_acid_hydroxylase"/>
</dbReference>
<dbReference type="InterPro" id="IPR050307">
    <property type="entry name" value="Sterol_Desaturase_Related"/>
</dbReference>
<dbReference type="PANTHER" id="PTHR11863">
    <property type="entry name" value="STEROL DESATURASE"/>
    <property type="match status" value="1"/>
</dbReference>
<dbReference type="Pfam" id="PF04116">
    <property type="entry name" value="FA_hydroxylase"/>
    <property type="match status" value="1"/>
</dbReference>
<name>SC5D_HUMAN</name>
<protein>
    <recommendedName>
        <fullName evidence="11">Lathosterol oxidase</fullName>
        <ecNumber evidence="4">1.14.19.20</ecNumber>
    </recommendedName>
    <alternativeName>
        <fullName>C-5 sterol desaturase</fullName>
    </alternativeName>
    <alternativeName>
        <fullName>Delta(7)-sterol 5-desaturase</fullName>
    </alternativeName>
    <alternativeName>
        <fullName>Delta(7)-sterol C5(6)-desaturase</fullName>
    </alternativeName>
    <alternativeName>
        <fullName>Lathosterol 5-desaturase</fullName>
    </alternativeName>
    <alternativeName>
        <fullName>Sterol-C5-desaturase</fullName>
    </alternativeName>
</protein>
<comment type="function">
    <text evidence="4 7 8">Catalyzes the penultimate step of the biosynthesis of cholesterol, the dehydrogenation of lathosterol into 7-dehydrocholesterol (7-DHC). Cholesterol is the major sterol component in mammalian membranes and a precursor for bile acid and steroid hormone synthesis (PubMed:10786622, PubMed:38297129). In addition to its essential role in cholesterol biosynthesis, it also indirectly regulates ferroptosis through the production of 7-DHC. By diverting the spread of damage caused by peroxyl radicals from the phospholipid components to its sterol nucleus, 7-DHC prevents this form of cell death (PubMed:38297129, PubMed:38297130).</text>
</comment>
<comment type="catalytic activity">
    <reaction evidence="4 7">
        <text>a Delta(7)-sterol + 2 Fe(II)-[cytochrome b5] + O2 + 2 H(+) = a Delta(5),Delta(7)-sterol + 2 Fe(III)-[cytochrome b5] + 2 H2O</text>
        <dbReference type="Rhea" id="RHEA:54320"/>
        <dbReference type="Rhea" id="RHEA-COMP:10438"/>
        <dbReference type="Rhea" id="RHEA-COMP:10439"/>
        <dbReference type="ChEBI" id="CHEBI:15377"/>
        <dbReference type="ChEBI" id="CHEBI:15378"/>
        <dbReference type="ChEBI" id="CHEBI:15379"/>
        <dbReference type="ChEBI" id="CHEBI:29033"/>
        <dbReference type="ChEBI" id="CHEBI:29034"/>
        <dbReference type="ChEBI" id="CHEBI:138130"/>
        <dbReference type="ChEBI" id="CHEBI:138131"/>
        <dbReference type="EC" id="1.14.19.20"/>
    </reaction>
    <physiologicalReaction direction="left-to-right" evidence="7">
        <dbReference type="Rhea" id="RHEA:54321"/>
    </physiologicalReaction>
</comment>
<comment type="catalytic activity">
    <reaction evidence="4 7">
        <text>lathosterol + 2 Fe(II)-[cytochrome b5] + O2 + 2 H(+) = 7-dehydrocholesterol + 2 Fe(III)-[cytochrome b5] + 2 H2O</text>
        <dbReference type="Rhea" id="RHEA:46556"/>
        <dbReference type="Rhea" id="RHEA-COMP:10438"/>
        <dbReference type="Rhea" id="RHEA-COMP:10439"/>
        <dbReference type="ChEBI" id="CHEBI:15377"/>
        <dbReference type="ChEBI" id="CHEBI:15378"/>
        <dbReference type="ChEBI" id="CHEBI:15379"/>
        <dbReference type="ChEBI" id="CHEBI:17168"/>
        <dbReference type="ChEBI" id="CHEBI:17759"/>
        <dbReference type="ChEBI" id="CHEBI:29033"/>
        <dbReference type="ChEBI" id="CHEBI:29034"/>
        <dbReference type="EC" id="1.14.19.20"/>
    </reaction>
    <physiologicalReaction direction="left-to-right" evidence="7">
        <dbReference type="Rhea" id="RHEA:46557"/>
    </physiologicalReaction>
</comment>
<comment type="catalytic activity">
    <reaction evidence="12">
        <text>5alpha-cholesta-7,24-dien-3beta-ol + 2 Fe(II)-[cytochrome b5] + O2 + 2 H(+) = 7-dehydrodesmosterol + 2 Fe(III)-[cytochrome b5] + 2 H2O</text>
        <dbReference type="Rhea" id="RHEA:47184"/>
        <dbReference type="Rhea" id="RHEA-COMP:10438"/>
        <dbReference type="Rhea" id="RHEA-COMP:10439"/>
        <dbReference type="ChEBI" id="CHEBI:15377"/>
        <dbReference type="ChEBI" id="CHEBI:15378"/>
        <dbReference type="ChEBI" id="CHEBI:15379"/>
        <dbReference type="ChEBI" id="CHEBI:16290"/>
        <dbReference type="ChEBI" id="CHEBI:27910"/>
        <dbReference type="ChEBI" id="CHEBI:29033"/>
        <dbReference type="ChEBI" id="CHEBI:29034"/>
    </reaction>
    <physiologicalReaction direction="left-to-right" evidence="12">
        <dbReference type="Rhea" id="RHEA:47185"/>
    </physiologicalReaction>
</comment>
<comment type="cofactor">
    <cofactor evidence="1">
        <name>Fe cation</name>
        <dbReference type="ChEBI" id="CHEBI:24875"/>
    </cofactor>
</comment>
<comment type="pathway">
    <text evidence="7">Steroid biosynthesis; cholesterol biosynthesis.</text>
</comment>
<comment type="subcellular location">
    <subcellularLocation>
        <location evidence="4">Endoplasmic reticulum membrane</location>
        <topology evidence="2">Multi-pass membrane protein</topology>
    </subcellularLocation>
</comment>
<comment type="domain">
    <text>The histidine box domains may contain the active site and/or be involved in metal ion binding.</text>
</comment>
<comment type="disease" evidence="5 6">
    <disease id="DI-01881">
        <name>Lathosterolosis</name>
        <acronym>LATHOS</acronym>
        <description>An autosomal recessive disorder characterized by multiple congenital anomalies affecting axial and appendicular skeleton, liver, central nervous and urogenital systems, and lysosomal storage.</description>
        <dbReference type="MIM" id="607330"/>
    </disease>
    <text>The disease is caused by variants affecting the gene represented in this entry.</text>
</comment>
<comment type="similarity">
    <text evidence="10">Belongs to the sterol desaturase family.</text>
</comment>
<reference key="1">
    <citation type="journal article" date="1996" name="Cytogenet. Cell Genet.">
        <title>Molecular cloning and mapping of a human cDNA(SC5DL) encoding a protein homologous to fungal sterol-C5-desaturase.</title>
        <authorList>
            <person name="Matsushima M."/>
            <person name="Inazawa J."/>
            <person name="Takahashi E."/>
            <person name="Suzumori K."/>
            <person name="Nakamura Y."/>
        </authorList>
    </citation>
    <scope>NUCLEOTIDE SEQUENCE [MRNA]</scope>
</reference>
<reference key="2">
    <citation type="journal article" date="1999" name="Plant Mol. Biol.">
        <title>Delta7-sterol-C5-desaturase: molecular characterization and functional expression of wild-type and mutant alleles.</title>
        <authorList>
            <person name="Husselstein T."/>
            <person name="Schaller H."/>
            <person name="Gachotte D."/>
            <person name="Benveniste P."/>
        </authorList>
    </citation>
    <scope>NUCLEOTIDE SEQUENCE [MRNA]</scope>
    <source>
        <tissue>B-cell</tissue>
    </source>
</reference>
<reference key="3">
    <citation type="journal article" date="2000" name="Biochim. Biophys. Acta">
        <title>cDNA cloning of the mammalian sterol C5-desaturase and the expression in yeast mutant.</title>
        <authorList>
            <person name="Nishi S."/>
            <person name="Nishino H."/>
            <person name="Ishibashi T."/>
        </authorList>
    </citation>
    <scope>NUCLEOTIDE SEQUENCE [MRNA]</scope>
    <scope>FUNCTION</scope>
    <scope>CATALYTIC ACTIVITY</scope>
    <scope>SUBCELLULAR LOCATION</scope>
    <source>
        <tissue>Liver</tissue>
    </source>
</reference>
<reference key="4">
    <citation type="submission" date="2001-03" db="EMBL/GenBank/DDBJ databases">
        <title>Human sterol C5 desaturase promoter.</title>
        <authorList>
            <person name="Sugawara T."/>
        </authorList>
    </citation>
    <scope>NUCLEOTIDE SEQUENCE [GENOMIC DNA]</scope>
</reference>
<reference key="5">
    <citation type="journal article" date="2004" name="Nat. Genet.">
        <title>Complete sequencing and characterization of 21,243 full-length human cDNAs.</title>
        <authorList>
            <person name="Ota T."/>
            <person name="Suzuki Y."/>
            <person name="Nishikawa T."/>
            <person name="Otsuki T."/>
            <person name="Sugiyama T."/>
            <person name="Irie R."/>
            <person name="Wakamatsu A."/>
            <person name="Hayashi K."/>
            <person name="Sato H."/>
            <person name="Nagai K."/>
            <person name="Kimura K."/>
            <person name="Makita H."/>
            <person name="Sekine M."/>
            <person name="Obayashi M."/>
            <person name="Nishi T."/>
            <person name="Shibahara T."/>
            <person name="Tanaka T."/>
            <person name="Ishii S."/>
            <person name="Yamamoto J."/>
            <person name="Saito K."/>
            <person name="Kawai Y."/>
            <person name="Isono Y."/>
            <person name="Nakamura Y."/>
            <person name="Nagahari K."/>
            <person name="Murakami K."/>
            <person name="Yasuda T."/>
            <person name="Iwayanagi T."/>
            <person name="Wagatsuma M."/>
            <person name="Shiratori A."/>
            <person name="Sudo H."/>
            <person name="Hosoiri T."/>
            <person name="Kaku Y."/>
            <person name="Kodaira H."/>
            <person name="Kondo H."/>
            <person name="Sugawara M."/>
            <person name="Takahashi M."/>
            <person name="Kanda K."/>
            <person name="Yokoi T."/>
            <person name="Furuya T."/>
            <person name="Kikkawa E."/>
            <person name="Omura Y."/>
            <person name="Abe K."/>
            <person name="Kamihara K."/>
            <person name="Katsuta N."/>
            <person name="Sato K."/>
            <person name="Tanikawa M."/>
            <person name="Yamazaki M."/>
            <person name="Ninomiya K."/>
            <person name="Ishibashi T."/>
            <person name="Yamashita H."/>
            <person name="Murakawa K."/>
            <person name="Fujimori K."/>
            <person name="Tanai H."/>
            <person name="Kimata M."/>
            <person name="Watanabe M."/>
            <person name="Hiraoka S."/>
            <person name="Chiba Y."/>
            <person name="Ishida S."/>
            <person name="Ono Y."/>
            <person name="Takiguchi S."/>
            <person name="Watanabe S."/>
            <person name="Yosida M."/>
            <person name="Hotuta T."/>
            <person name="Kusano J."/>
            <person name="Kanehori K."/>
            <person name="Takahashi-Fujii A."/>
            <person name="Hara H."/>
            <person name="Tanase T.-O."/>
            <person name="Nomura Y."/>
            <person name="Togiya S."/>
            <person name="Komai F."/>
            <person name="Hara R."/>
            <person name="Takeuchi K."/>
            <person name="Arita M."/>
            <person name="Imose N."/>
            <person name="Musashino K."/>
            <person name="Yuuki H."/>
            <person name="Oshima A."/>
            <person name="Sasaki N."/>
            <person name="Aotsuka S."/>
            <person name="Yoshikawa Y."/>
            <person name="Matsunawa H."/>
            <person name="Ichihara T."/>
            <person name="Shiohata N."/>
            <person name="Sano S."/>
            <person name="Moriya S."/>
            <person name="Momiyama H."/>
            <person name="Satoh N."/>
            <person name="Takami S."/>
            <person name="Terashima Y."/>
            <person name="Suzuki O."/>
            <person name="Nakagawa S."/>
            <person name="Senoh A."/>
            <person name="Mizoguchi H."/>
            <person name="Goto Y."/>
            <person name="Shimizu F."/>
            <person name="Wakebe H."/>
            <person name="Hishigaki H."/>
            <person name="Watanabe T."/>
            <person name="Sugiyama A."/>
            <person name="Takemoto M."/>
            <person name="Kawakami B."/>
            <person name="Yamazaki M."/>
            <person name="Watanabe K."/>
            <person name="Kumagai A."/>
            <person name="Itakura S."/>
            <person name="Fukuzumi Y."/>
            <person name="Fujimori Y."/>
            <person name="Komiyama M."/>
            <person name="Tashiro H."/>
            <person name="Tanigami A."/>
            <person name="Fujiwara T."/>
            <person name="Ono T."/>
            <person name="Yamada K."/>
            <person name="Fujii Y."/>
            <person name="Ozaki K."/>
            <person name="Hirao M."/>
            <person name="Ohmori Y."/>
            <person name="Kawabata A."/>
            <person name="Hikiji T."/>
            <person name="Kobatake N."/>
            <person name="Inagaki H."/>
            <person name="Ikema Y."/>
            <person name="Okamoto S."/>
            <person name="Okitani R."/>
            <person name="Kawakami T."/>
            <person name="Noguchi S."/>
            <person name="Itoh T."/>
            <person name="Shigeta K."/>
            <person name="Senba T."/>
            <person name="Matsumura K."/>
            <person name="Nakajima Y."/>
            <person name="Mizuno T."/>
            <person name="Morinaga M."/>
            <person name="Sasaki M."/>
            <person name="Togashi T."/>
            <person name="Oyama M."/>
            <person name="Hata H."/>
            <person name="Watanabe M."/>
            <person name="Komatsu T."/>
            <person name="Mizushima-Sugano J."/>
            <person name="Satoh T."/>
            <person name="Shirai Y."/>
            <person name="Takahashi Y."/>
            <person name="Nakagawa K."/>
            <person name="Okumura K."/>
            <person name="Nagase T."/>
            <person name="Nomura N."/>
            <person name="Kikuchi H."/>
            <person name="Masuho Y."/>
            <person name="Yamashita R."/>
            <person name="Nakai K."/>
            <person name="Yada T."/>
            <person name="Nakamura Y."/>
            <person name="Ohara O."/>
            <person name="Isogai T."/>
            <person name="Sugano S."/>
        </authorList>
    </citation>
    <scope>NUCLEOTIDE SEQUENCE [LARGE SCALE MRNA]</scope>
</reference>
<reference key="6">
    <citation type="submission" date="2005-04" db="EMBL/GenBank/DDBJ databases">
        <authorList>
            <person name="Suzuki Y."/>
            <person name="Sugano S."/>
            <person name="Totoki Y."/>
            <person name="Toyoda A."/>
            <person name="Takeda T."/>
            <person name="Sakaki Y."/>
            <person name="Tanaka A."/>
            <person name="Yokoyama S."/>
        </authorList>
    </citation>
    <scope>NUCLEOTIDE SEQUENCE [LARGE SCALE MRNA]</scope>
    <source>
        <tissue>Brain</tissue>
        <tissue>Kidney</tissue>
    </source>
</reference>
<reference key="7">
    <citation type="submission" date="2005-07" db="EMBL/GenBank/DDBJ databases">
        <authorList>
            <person name="Mural R.J."/>
            <person name="Istrail S."/>
            <person name="Sutton G."/>
            <person name="Florea L."/>
            <person name="Halpern A.L."/>
            <person name="Mobarry C.M."/>
            <person name="Lippert R."/>
            <person name="Walenz B."/>
            <person name="Shatkay H."/>
            <person name="Dew I."/>
            <person name="Miller J.R."/>
            <person name="Flanigan M.J."/>
            <person name="Edwards N.J."/>
            <person name="Bolanos R."/>
            <person name="Fasulo D."/>
            <person name="Halldorsson B.V."/>
            <person name="Hannenhalli S."/>
            <person name="Turner R."/>
            <person name="Yooseph S."/>
            <person name="Lu F."/>
            <person name="Nusskern D.R."/>
            <person name="Shue B.C."/>
            <person name="Zheng X.H."/>
            <person name="Zhong F."/>
            <person name="Delcher A.L."/>
            <person name="Huson D.H."/>
            <person name="Kravitz S.A."/>
            <person name="Mouchard L."/>
            <person name="Reinert K."/>
            <person name="Remington K.A."/>
            <person name="Clark A.G."/>
            <person name="Waterman M.S."/>
            <person name="Eichler E.E."/>
            <person name="Adams M.D."/>
            <person name="Hunkapiller M.W."/>
            <person name="Myers E.W."/>
            <person name="Venter J.C."/>
        </authorList>
    </citation>
    <scope>NUCLEOTIDE SEQUENCE [LARGE SCALE GENOMIC DNA]</scope>
</reference>
<reference key="8">
    <citation type="journal article" date="2004" name="Genome Res.">
        <title>The status, quality, and expansion of the NIH full-length cDNA project: the Mammalian Gene Collection (MGC).</title>
        <authorList>
            <consortium name="The MGC Project Team"/>
        </authorList>
    </citation>
    <scope>NUCLEOTIDE SEQUENCE [LARGE SCALE MRNA]</scope>
    <source>
        <tissue>Lung</tissue>
    </source>
</reference>
<reference key="9">
    <citation type="journal article" date="2011" name="Sci. Signal.">
        <title>System-wide temporal characterization of the proteome and phosphoproteome of human embryonic stem cell differentiation.</title>
        <authorList>
            <person name="Rigbolt K.T."/>
            <person name="Prokhorova T.A."/>
            <person name="Akimov V."/>
            <person name="Henningsen J."/>
            <person name="Johansen P.T."/>
            <person name="Kratchmarova I."/>
            <person name="Kassem M."/>
            <person name="Mann M."/>
            <person name="Olsen J.V."/>
            <person name="Blagoev B."/>
        </authorList>
    </citation>
    <scope>PHOSPHORYLATION [LARGE SCALE ANALYSIS] AT SER-253</scope>
    <scope>IDENTIFICATION BY MASS SPECTROMETRY [LARGE SCALE ANALYSIS]</scope>
</reference>
<reference key="10">
    <citation type="journal article" date="2024" name="Nature">
        <title>7-Dehydrocholesterol is an endogenous suppressor of ferroptosis.</title>
        <authorList>
            <person name="Freitas F.P."/>
            <person name="Alborzinia H."/>
            <person name="Dos Santos A.F."/>
            <person name="Nepachalovich P."/>
            <person name="Pedrera L."/>
            <person name="Zilka O."/>
            <person name="Inague A."/>
            <person name="Klein C."/>
            <person name="Aroua N."/>
            <person name="Kaushal K."/>
            <person name="Kast B."/>
            <person name="Lorenz S.M."/>
            <person name="Kunz V."/>
            <person name="Nehring H."/>
            <person name="Xavier da Silva T.N."/>
            <person name="Chen Z."/>
            <person name="Atici S."/>
            <person name="Doll S.G."/>
            <person name="Schaefer E.L."/>
            <person name="Ekpo I."/>
            <person name="Schmitz W."/>
            <person name="Horling A."/>
            <person name="Imming P."/>
            <person name="Miyamoto S."/>
            <person name="Wehman A.M."/>
            <person name="Genaro-Mattos T.C."/>
            <person name="Mirnics K."/>
            <person name="Kumar L."/>
            <person name="Klein-Seetharaman J."/>
            <person name="Meierjohann S."/>
            <person name="Weigand I."/>
            <person name="Kroiss M."/>
            <person name="Bornkamm G.W."/>
            <person name="Gomes F."/>
            <person name="Netto L.E.S."/>
            <person name="Sathian M.B."/>
            <person name="Konrad D.B."/>
            <person name="Covey D.F."/>
            <person name="Michalke B."/>
            <person name="Bommert K."/>
            <person name="Bargou R.C."/>
            <person name="Garcia-Saez A."/>
            <person name="Pratt D.A."/>
            <person name="Fedorova M."/>
            <person name="Trumpp A."/>
            <person name="Conrad M."/>
            <person name="Friedmann Angeli J.P."/>
        </authorList>
    </citation>
    <scope>FUNCTION</scope>
    <scope>CATALYTIC ACTIVITY</scope>
    <scope>PATHWAY</scope>
</reference>
<reference key="11">
    <citation type="journal article" date="2024" name="Nature">
        <title>7-Dehydrocholesterol dictates ferroptosis sensitivity.</title>
        <authorList>
            <person name="Li Y."/>
            <person name="Ran Q."/>
            <person name="Duan Q."/>
            <person name="Jin J."/>
            <person name="Wang Y."/>
            <person name="Yu L."/>
            <person name="Wang C."/>
            <person name="Zhu Z."/>
            <person name="Chen X."/>
            <person name="Weng L."/>
            <person name="Li Z."/>
            <person name="Wang J."/>
            <person name="Wu Q."/>
            <person name="Wang H."/>
            <person name="Tian H."/>
            <person name="Song S."/>
            <person name="Shan Z."/>
            <person name="Zhai Q."/>
            <person name="Qin H."/>
            <person name="Chen S."/>
            <person name="Fang L."/>
            <person name="Yin H."/>
            <person name="Zhou H."/>
            <person name="Jiang X."/>
            <person name="Wang P."/>
        </authorList>
    </citation>
    <scope>FUNCTION</scope>
    <scope>CATALYTIC ACTIVITY</scope>
</reference>
<reference key="12">
    <citation type="journal article" date="2002" name="Am. J. Hum. Genet.">
        <title>Lathosterolosis, a novel multiple-malformation/mental retardation syndrome due to deficiency of 3beta-hydroxysteroid-delta5-desaturase.</title>
        <authorList>
            <person name="Brunetti-Pierri N."/>
            <person name="Corso G."/>
            <person name="Rossi M."/>
            <person name="Ferrari P."/>
            <person name="Balli F."/>
            <person name="Rivasi F."/>
            <person name="Annunziata I."/>
            <person name="Ballabio A."/>
            <person name="Dello Russo A."/>
            <person name="Andria G."/>
            <person name="Parenti G."/>
        </authorList>
    </citation>
    <scope>VARIANTS LATHOS GLN-29 AND ASP-211</scope>
</reference>
<reference key="13">
    <citation type="journal article" date="2003" name="Hum. Mol. Genet.">
        <title>Lathosterolosis: an inborn error of human and murine cholesterol synthesis due to lathosterol 5-desaturase deficiency.</title>
        <authorList>
            <person name="Krakowiak P.A."/>
            <person name="Wassif C.A."/>
            <person name="Kratz L."/>
            <person name="Cozma D."/>
            <person name="Kovarova M."/>
            <person name="Harris G."/>
            <person name="Grinberg A."/>
            <person name="Yang Y."/>
            <person name="Hunter A.G.W."/>
            <person name="Tsokos M."/>
            <person name="Kelley R.I."/>
            <person name="Porter F.D."/>
        </authorList>
    </citation>
    <scope>VARIANT LATHOS SER-46</scope>
</reference>
<evidence type="ECO:0000250" key="1">
    <source>
        <dbReference type="UniProtKB" id="P53045"/>
    </source>
</evidence>
<evidence type="ECO:0000255" key="2"/>
<evidence type="ECO:0000256" key="3">
    <source>
        <dbReference type="SAM" id="MobiDB-lite"/>
    </source>
</evidence>
<evidence type="ECO:0000269" key="4">
    <source>
    </source>
</evidence>
<evidence type="ECO:0000269" key="5">
    <source>
    </source>
</evidence>
<evidence type="ECO:0000269" key="6">
    <source>
    </source>
</evidence>
<evidence type="ECO:0000269" key="7">
    <source>
    </source>
</evidence>
<evidence type="ECO:0000269" key="8">
    <source>
    </source>
</evidence>
<evidence type="ECO:0000303" key="9">
    <source>
    </source>
</evidence>
<evidence type="ECO:0000305" key="10"/>
<evidence type="ECO:0000305" key="11">
    <source>
    </source>
</evidence>
<evidence type="ECO:0000305" key="12">
    <source>
    </source>
</evidence>
<evidence type="ECO:0000312" key="13">
    <source>
        <dbReference type="HGNC" id="HGNC:10547"/>
    </source>
</evidence>
<evidence type="ECO:0007744" key="14">
    <source>
    </source>
</evidence>
<organism>
    <name type="scientific">Homo sapiens</name>
    <name type="common">Human</name>
    <dbReference type="NCBI Taxonomy" id="9606"/>
    <lineage>
        <taxon>Eukaryota</taxon>
        <taxon>Metazoa</taxon>
        <taxon>Chordata</taxon>
        <taxon>Craniata</taxon>
        <taxon>Vertebrata</taxon>
        <taxon>Euteleostomi</taxon>
        <taxon>Mammalia</taxon>
        <taxon>Eutheria</taxon>
        <taxon>Euarchontoglires</taxon>
        <taxon>Primates</taxon>
        <taxon>Haplorrhini</taxon>
        <taxon>Catarrhini</taxon>
        <taxon>Hominidae</taxon>
        <taxon>Homo</taxon>
    </lineage>
</organism>
<feature type="chain" id="PRO_0000117028" description="Lathosterol oxidase">
    <location>
        <begin position="1"/>
        <end position="299"/>
    </location>
</feature>
<feature type="transmembrane region" description="Helical" evidence="2">
    <location>
        <begin position="32"/>
        <end position="52"/>
    </location>
</feature>
<feature type="transmembrane region" description="Helical" evidence="2">
    <location>
        <begin position="79"/>
        <end position="99"/>
    </location>
</feature>
<feature type="transmembrane region" description="Helical" evidence="2">
    <location>
        <begin position="117"/>
        <end position="137"/>
    </location>
</feature>
<feature type="transmembrane region" description="Helical" evidence="2">
    <location>
        <begin position="186"/>
        <end position="206"/>
    </location>
</feature>
<feature type="domain" description="Fatty acid hydroxylase" evidence="2">
    <location>
        <begin position="124"/>
        <end position="252"/>
    </location>
</feature>
<feature type="region of interest" description="Disordered" evidence="3">
    <location>
        <begin position="274"/>
        <end position="299"/>
    </location>
</feature>
<feature type="short sequence motif" description="Histidine box-1">
    <location>
        <begin position="138"/>
        <end position="143"/>
    </location>
</feature>
<feature type="short sequence motif" description="Histidine box-2">
    <location>
        <begin position="151"/>
        <end position="155"/>
    </location>
</feature>
<feature type="short sequence motif" description="Histidine box-3">
    <location>
        <begin position="228"/>
        <end position="233"/>
    </location>
</feature>
<feature type="compositionally biased region" description="Basic and acidic residues" evidence="3">
    <location>
        <begin position="286"/>
        <end position="299"/>
    </location>
</feature>
<feature type="modified residue" description="Phosphoserine" evidence="14">
    <location>
        <position position="253"/>
    </location>
</feature>
<feature type="sequence variant" id="VAR_014423" description="In LATHOS; dbSNP:rs104894295." evidence="5">
    <original>R</original>
    <variation>Q</variation>
    <location>
        <position position="29"/>
    </location>
</feature>
<feature type="sequence variant" id="VAR_020829" description="In LATHOS; dbSNP:rs104894297." evidence="6">
    <original>Y</original>
    <variation>S</variation>
    <location>
        <position position="46"/>
    </location>
</feature>
<feature type="sequence variant" id="VAR_014424" description="In LATHOS; dbSNP:rs104894296." evidence="5">
    <original>G</original>
    <variation>D</variation>
    <location>
        <position position="211"/>
    </location>
</feature>
<feature type="sequence conflict" description="In Ref. 1; BAA18970." evidence="10" ref="1">
    <original>PQILQPFINGSAHHTDHHMFFDYNYGQYFTLWDRIGGSFKNPSSFEGKGPLSYVKEMTEGKRSSHSGNGCKNEKLFNGEFTKTE</original>
    <variation>RMKNYSMESLQRLNRLLPSYS</variation>
    <location>
        <begin position="216"/>
        <end position="299"/>
    </location>
</feature>
<feature type="sequence conflict" description="In Ref. 3; BAA33729 and 4; BAB68218." evidence="10" ref="3 4">
    <original>H</original>
    <variation>P</variation>
    <location>
        <position position="280"/>
    </location>
</feature>
<keyword id="KW-0225">Disease variant</keyword>
<keyword id="KW-0256">Endoplasmic reticulum</keyword>
<keyword id="KW-0408">Iron</keyword>
<keyword id="KW-0444">Lipid biosynthesis</keyword>
<keyword id="KW-0443">Lipid metabolism</keyword>
<keyword id="KW-0472">Membrane</keyword>
<keyword id="KW-0560">Oxidoreductase</keyword>
<keyword id="KW-0597">Phosphoprotein</keyword>
<keyword id="KW-1267">Proteomics identification</keyword>
<keyword id="KW-1185">Reference proteome</keyword>
<keyword id="KW-0752">Steroid biosynthesis</keyword>
<keyword id="KW-0753">Steroid metabolism</keyword>
<keyword id="KW-0756">Sterol biosynthesis</keyword>
<keyword id="KW-1207">Sterol metabolism</keyword>
<keyword id="KW-0812">Transmembrane</keyword>
<keyword id="KW-1133">Transmembrane helix</keyword>